<proteinExistence type="inferred from homology"/>
<accession>B1HMW6</accession>
<feature type="chain" id="PRO_1000140578" description="Small ribosomal subunit protein uS8">
    <location>
        <begin position="1"/>
        <end position="132"/>
    </location>
</feature>
<protein>
    <recommendedName>
        <fullName evidence="1">Small ribosomal subunit protein uS8</fullName>
    </recommendedName>
    <alternativeName>
        <fullName evidence="2">30S ribosomal protein S8</fullName>
    </alternativeName>
</protein>
<organism>
    <name type="scientific">Lysinibacillus sphaericus (strain C3-41)</name>
    <dbReference type="NCBI Taxonomy" id="444177"/>
    <lineage>
        <taxon>Bacteria</taxon>
        <taxon>Bacillati</taxon>
        <taxon>Bacillota</taxon>
        <taxon>Bacilli</taxon>
        <taxon>Bacillales</taxon>
        <taxon>Bacillaceae</taxon>
        <taxon>Lysinibacillus</taxon>
    </lineage>
</organism>
<name>RS8_LYSSC</name>
<sequence>MTMTDPIADMLTRIRNANMVRHEKLEVPASNVKKEIAEILKREGFVRDVEYVEDNKQGIIRIFLKYGKDNERVITGLKRISKPGLRVYAKTNEVPKVLNGLGIALVSTSQGLLTDKEARAKQVGGEVLAYVW</sequence>
<comment type="function">
    <text evidence="1">One of the primary rRNA binding proteins, it binds directly to 16S rRNA central domain where it helps coordinate assembly of the platform of the 30S subunit.</text>
</comment>
<comment type="subunit">
    <text evidence="1">Part of the 30S ribosomal subunit. Contacts proteins S5 and S12.</text>
</comment>
<comment type="similarity">
    <text evidence="1">Belongs to the universal ribosomal protein uS8 family.</text>
</comment>
<reference key="1">
    <citation type="journal article" date="2008" name="J. Bacteriol.">
        <title>Complete genome sequence of the mosquitocidal bacterium Bacillus sphaericus C3-41 and comparison with those of closely related Bacillus species.</title>
        <authorList>
            <person name="Hu X."/>
            <person name="Fan W."/>
            <person name="Han B."/>
            <person name="Liu H."/>
            <person name="Zheng D."/>
            <person name="Li Q."/>
            <person name="Dong W."/>
            <person name="Yan J."/>
            <person name="Gao M."/>
            <person name="Berry C."/>
            <person name="Yuan Z."/>
        </authorList>
    </citation>
    <scope>NUCLEOTIDE SEQUENCE [LARGE SCALE GENOMIC DNA]</scope>
    <source>
        <strain>C3-41</strain>
    </source>
</reference>
<evidence type="ECO:0000255" key="1">
    <source>
        <dbReference type="HAMAP-Rule" id="MF_01302"/>
    </source>
</evidence>
<evidence type="ECO:0000305" key="2"/>
<keyword id="KW-0687">Ribonucleoprotein</keyword>
<keyword id="KW-0689">Ribosomal protein</keyword>
<keyword id="KW-0694">RNA-binding</keyword>
<keyword id="KW-0699">rRNA-binding</keyword>
<dbReference type="EMBL" id="CP000817">
    <property type="protein sequence ID" value="ACA42044.1"/>
    <property type="molecule type" value="Genomic_DNA"/>
</dbReference>
<dbReference type="RefSeq" id="WP_008181717.1">
    <property type="nucleotide sequence ID" value="NC_010382.1"/>
</dbReference>
<dbReference type="SMR" id="B1HMW6"/>
<dbReference type="EnsemblBacteria" id="ACA42044">
    <property type="protein sequence ID" value="ACA42044"/>
    <property type="gene ID" value="Bsph_4600"/>
</dbReference>
<dbReference type="GeneID" id="96596903"/>
<dbReference type="KEGG" id="lsp:Bsph_4600"/>
<dbReference type="HOGENOM" id="CLU_098428_0_2_9"/>
<dbReference type="Proteomes" id="UP000002164">
    <property type="component" value="Chromosome"/>
</dbReference>
<dbReference type="GO" id="GO:1990904">
    <property type="term" value="C:ribonucleoprotein complex"/>
    <property type="evidence" value="ECO:0007669"/>
    <property type="project" value="UniProtKB-KW"/>
</dbReference>
<dbReference type="GO" id="GO:0005840">
    <property type="term" value="C:ribosome"/>
    <property type="evidence" value="ECO:0007669"/>
    <property type="project" value="UniProtKB-KW"/>
</dbReference>
<dbReference type="GO" id="GO:0019843">
    <property type="term" value="F:rRNA binding"/>
    <property type="evidence" value="ECO:0007669"/>
    <property type="project" value="UniProtKB-UniRule"/>
</dbReference>
<dbReference type="GO" id="GO:0003735">
    <property type="term" value="F:structural constituent of ribosome"/>
    <property type="evidence" value="ECO:0007669"/>
    <property type="project" value="InterPro"/>
</dbReference>
<dbReference type="GO" id="GO:0006412">
    <property type="term" value="P:translation"/>
    <property type="evidence" value="ECO:0007669"/>
    <property type="project" value="UniProtKB-UniRule"/>
</dbReference>
<dbReference type="FunFam" id="3.30.1370.30:FF:000002">
    <property type="entry name" value="30S ribosomal protein S8"/>
    <property type="match status" value="1"/>
</dbReference>
<dbReference type="FunFam" id="3.30.1490.10:FF:000001">
    <property type="entry name" value="30S ribosomal protein S8"/>
    <property type="match status" value="1"/>
</dbReference>
<dbReference type="Gene3D" id="3.30.1370.30">
    <property type="match status" value="1"/>
</dbReference>
<dbReference type="Gene3D" id="3.30.1490.10">
    <property type="match status" value="1"/>
</dbReference>
<dbReference type="HAMAP" id="MF_01302_B">
    <property type="entry name" value="Ribosomal_uS8_B"/>
    <property type="match status" value="1"/>
</dbReference>
<dbReference type="InterPro" id="IPR000630">
    <property type="entry name" value="Ribosomal_uS8"/>
</dbReference>
<dbReference type="InterPro" id="IPR047863">
    <property type="entry name" value="Ribosomal_uS8_CS"/>
</dbReference>
<dbReference type="InterPro" id="IPR035987">
    <property type="entry name" value="Ribosomal_uS8_sf"/>
</dbReference>
<dbReference type="NCBIfam" id="NF001109">
    <property type="entry name" value="PRK00136.1"/>
    <property type="match status" value="1"/>
</dbReference>
<dbReference type="PANTHER" id="PTHR11758">
    <property type="entry name" value="40S RIBOSOMAL PROTEIN S15A"/>
    <property type="match status" value="1"/>
</dbReference>
<dbReference type="Pfam" id="PF00410">
    <property type="entry name" value="Ribosomal_S8"/>
    <property type="match status" value="1"/>
</dbReference>
<dbReference type="SUPFAM" id="SSF56047">
    <property type="entry name" value="Ribosomal protein S8"/>
    <property type="match status" value="1"/>
</dbReference>
<dbReference type="PROSITE" id="PS00053">
    <property type="entry name" value="RIBOSOMAL_S8"/>
    <property type="match status" value="1"/>
</dbReference>
<gene>
    <name evidence="1" type="primary">rpsH</name>
    <name type="ordered locus">Bsph_4600</name>
</gene>